<comment type="function">
    <text evidence="1">Required for maturation of 30S ribosomal subunits.</text>
</comment>
<comment type="subcellular location">
    <subcellularLocation>
        <location evidence="1">Cytoplasm</location>
    </subcellularLocation>
</comment>
<comment type="similarity">
    <text evidence="1">Belongs to the RimP family.</text>
</comment>
<reference key="1">
    <citation type="journal article" date="2008" name="Proc. Natl. Acad. Sci. U.S.A.">
        <title>Complete genome of the uncultured termite group 1 bacteria in a single host protist cell.</title>
        <authorList>
            <person name="Hongoh Y."/>
            <person name="Sharma V.K."/>
            <person name="Prakash T."/>
            <person name="Noda S."/>
            <person name="Taylor T.D."/>
            <person name="Kudo T."/>
            <person name="Sakaki Y."/>
            <person name="Toyoda A."/>
            <person name="Hattori M."/>
            <person name="Ohkuma M."/>
        </authorList>
    </citation>
    <scope>NUCLEOTIDE SEQUENCE [LARGE SCALE GENOMIC DNA]</scope>
</reference>
<sequence>MRKVQEIEDLLAPVAAREKIEIVDVQYSKKAGDWVARIFIDKDSGVTISDCENISCIFGAFLDESDILKDSYVLEISSPGFKRVLKSEKSFRRFIGSKTRIRTFKPINNQRNFLGTLLNFDDGRIKINDVTNGVVEIEFSDIRKANIEADI</sequence>
<name>RIMP_ENDTX</name>
<dbReference type="EMBL" id="AP009510">
    <property type="protein sequence ID" value="BAG13716.1"/>
    <property type="molecule type" value="Genomic_DNA"/>
</dbReference>
<dbReference type="RefSeq" id="WP_015423243.1">
    <property type="nucleotide sequence ID" value="NC_020419.1"/>
</dbReference>
<dbReference type="SMR" id="B1GZN4"/>
<dbReference type="STRING" id="471821.TGRD_233"/>
<dbReference type="KEGG" id="rsd:TGRD_233"/>
<dbReference type="PATRIC" id="fig|471821.5.peg.349"/>
<dbReference type="HOGENOM" id="CLU_070525_2_2_0"/>
<dbReference type="Proteomes" id="UP000001691">
    <property type="component" value="Chromosome"/>
</dbReference>
<dbReference type="GO" id="GO:0005829">
    <property type="term" value="C:cytosol"/>
    <property type="evidence" value="ECO:0007669"/>
    <property type="project" value="TreeGrafter"/>
</dbReference>
<dbReference type="GO" id="GO:0000028">
    <property type="term" value="P:ribosomal small subunit assembly"/>
    <property type="evidence" value="ECO:0007669"/>
    <property type="project" value="TreeGrafter"/>
</dbReference>
<dbReference type="GO" id="GO:0006412">
    <property type="term" value="P:translation"/>
    <property type="evidence" value="ECO:0007669"/>
    <property type="project" value="TreeGrafter"/>
</dbReference>
<dbReference type="CDD" id="cd01734">
    <property type="entry name" value="YlxS_C"/>
    <property type="match status" value="1"/>
</dbReference>
<dbReference type="FunFam" id="3.30.300.70:FF:000001">
    <property type="entry name" value="Ribosome maturation factor RimP"/>
    <property type="match status" value="1"/>
</dbReference>
<dbReference type="Gene3D" id="2.30.30.180">
    <property type="entry name" value="Ribosome maturation factor RimP, C-terminal domain"/>
    <property type="match status" value="1"/>
</dbReference>
<dbReference type="Gene3D" id="3.30.300.70">
    <property type="entry name" value="RimP-like superfamily, N-terminal"/>
    <property type="match status" value="1"/>
</dbReference>
<dbReference type="HAMAP" id="MF_01077">
    <property type="entry name" value="RimP"/>
    <property type="match status" value="1"/>
</dbReference>
<dbReference type="InterPro" id="IPR003728">
    <property type="entry name" value="Ribosome_maturation_RimP"/>
</dbReference>
<dbReference type="InterPro" id="IPR028998">
    <property type="entry name" value="RimP_C"/>
</dbReference>
<dbReference type="InterPro" id="IPR036847">
    <property type="entry name" value="RimP_C_sf"/>
</dbReference>
<dbReference type="InterPro" id="IPR028989">
    <property type="entry name" value="RimP_N"/>
</dbReference>
<dbReference type="InterPro" id="IPR035956">
    <property type="entry name" value="RimP_N_sf"/>
</dbReference>
<dbReference type="PANTHER" id="PTHR33867">
    <property type="entry name" value="RIBOSOME MATURATION FACTOR RIMP"/>
    <property type="match status" value="1"/>
</dbReference>
<dbReference type="PANTHER" id="PTHR33867:SF1">
    <property type="entry name" value="RIBOSOME MATURATION FACTOR RIMP"/>
    <property type="match status" value="1"/>
</dbReference>
<dbReference type="Pfam" id="PF17384">
    <property type="entry name" value="DUF150_C"/>
    <property type="match status" value="1"/>
</dbReference>
<dbReference type="Pfam" id="PF02576">
    <property type="entry name" value="RimP_N"/>
    <property type="match status" value="1"/>
</dbReference>
<dbReference type="SUPFAM" id="SSF74942">
    <property type="entry name" value="YhbC-like, C-terminal domain"/>
    <property type="match status" value="1"/>
</dbReference>
<dbReference type="SUPFAM" id="SSF75420">
    <property type="entry name" value="YhbC-like, N-terminal domain"/>
    <property type="match status" value="1"/>
</dbReference>
<protein>
    <recommendedName>
        <fullName evidence="1">Ribosome maturation factor RimP</fullName>
    </recommendedName>
</protein>
<feature type="chain" id="PRO_0000384803" description="Ribosome maturation factor RimP">
    <location>
        <begin position="1"/>
        <end position="151"/>
    </location>
</feature>
<organism>
    <name type="scientific">Endomicrobium trichonymphae</name>
    <dbReference type="NCBI Taxonomy" id="1408204"/>
    <lineage>
        <taxon>Bacteria</taxon>
        <taxon>Pseudomonadati</taxon>
        <taxon>Elusimicrobiota</taxon>
        <taxon>Endomicrobiia</taxon>
        <taxon>Endomicrobiales</taxon>
        <taxon>Endomicrobiaceae</taxon>
        <taxon>Candidatus Endomicrobiellum</taxon>
    </lineage>
</organism>
<gene>
    <name evidence="1" type="primary">rimP</name>
    <name type="ordered locus">TGRD_233</name>
</gene>
<proteinExistence type="inferred from homology"/>
<accession>B1GZN4</accession>
<keyword id="KW-0963">Cytoplasm</keyword>
<keyword id="KW-0690">Ribosome biogenesis</keyword>
<evidence type="ECO:0000255" key="1">
    <source>
        <dbReference type="HAMAP-Rule" id="MF_01077"/>
    </source>
</evidence>